<gene>
    <name evidence="1" type="primary">speD</name>
    <name type="ordered locus">XF_1539</name>
</gene>
<proteinExistence type="inferred from homology"/>
<name>SPED_XYLFA</name>
<feature type="chain" id="PRO_0000030071" description="S-adenosylmethionine decarboxylase beta chain" evidence="1">
    <location>
        <begin position="1"/>
        <end position="112"/>
    </location>
</feature>
<feature type="chain" id="PRO_0000030072" description="S-adenosylmethionine decarboxylase alpha chain" evidence="1">
    <location>
        <begin position="113"/>
        <end position="264"/>
    </location>
</feature>
<feature type="active site" description="Schiff-base intermediate with substrate; via pyruvic acid" evidence="1">
    <location>
        <position position="113"/>
    </location>
</feature>
<feature type="active site" description="Proton acceptor; for processing activity" evidence="1">
    <location>
        <position position="118"/>
    </location>
</feature>
<feature type="active site" description="Proton donor; for catalytic activity" evidence="1">
    <location>
        <position position="141"/>
    </location>
</feature>
<feature type="site" description="Cleavage (non-hydrolytic); by autolysis" evidence="1">
    <location>
        <begin position="112"/>
        <end position="113"/>
    </location>
</feature>
<feature type="modified residue" description="Pyruvic acid (Ser); by autocatalysis" evidence="1">
    <location>
        <position position="113"/>
    </location>
</feature>
<dbReference type="EC" id="4.1.1.50" evidence="1"/>
<dbReference type="EMBL" id="AE003849">
    <property type="protein sequence ID" value="AAF84348.1"/>
    <property type="molecule type" value="Genomic_DNA"/>
</dbReference>
<dbReference type="PIR" id="H82669">
    <property type="entry name" value="H82669"/>
</dbReference>
<dbReference type="RefSeq" id="WP_004083667.1">
    <property type="nucleotide sequence ID" value="NC_002488.3"/>
</dbReference>
<dbReference type="STRING" id="160492.XF_1539"/>
<dbReference type="KEGG" id="xfa:XF_1539"/>
<dbReference type="eggNOG" id="COG1586">
    <property type="taxonomic scope" value="Bacteria"/>
</dbReference>
<dbReference type="HOGENOM" id="CLU_092007_0_0_6"/>
<dbReference type="UniPathway" id="UPA00331">
    <property type="reaction ID" value="UER00451"/>
</dbReference>
<dbReference type="Proteomes" id="UP000000812">
    <property type="component" value="Chromosome"/>
</dbReference>
<dbReference type="GO" id="GO:0005829">
    <property type="term" value="C:cytosol"/>
    <property type="evidence" value="ECO:0007669"/>
    <property type="project" value="TreeGrafter"/>
</dbReference>
<dbReference type="GO" id="GO:0004014">
    <property type="term" value="F:adenosylmethionine decarboxylase activity"/>
    <property type="evidence" value="ECO:0007669"/>
    <property type="project" value="UniProtKB-UniRule"/>
</dbReference>
<dbReference type="GO" id="GO:0008295">
    <property type="term" value="P:spermidine biosynthetic process"/>
    <property type="evidence" value="ECO:0007669"/>
    <property type="project" value="UniProtKB-UniRule"/>
</dbReference>
<dbReference type="FunFam" id="3.60.90.10:FF:000001">
    <property type="entry name" value="S-adenosylmethionine decarboxylase proenzyme"/>
    <property type="match status" value="1"/>
</dbReference>
<dbReference type="Gene3D" id="3.60.90.10">
    <property type="entry name" value="S-adenosylmethionine decarboxylase"/>
    <property type="match status" value="1"/>
</dbReference>
<dbReference type="HAMAP" id="MF_00465">
    <property type="entry name" value="AdoMetDC_2"/>
    <property type="match status" value="1"/>
</dbReference>
<dbReference type="InterPro" id="IPR003826">
    <property type="entry name" value="AdoMetDC_fam_prok"/>
</dbReference>
<dbReference type="InterPro" id="IPR009165">
    <property type="entry name" value="S-AdoMet_deCO2ase_bac"/>
</dbReference>
<dbReference type="InterPro" id="IPR016067">
    <property type="entry name" value="S-AdoMet_deCO2ase_core"/>
</dbReference>
<dbReference type="NCBIfam" id="TIGR03331">
    <property type="entry name" value="SAM_DCase_Eco"/>
    <property type="match status" value="1"/>
</dbReference>
<dbReference type="PANTHER" id="PTHR33866">
    <property type="entry name" value="S-ADENOSYLMETHIONINE DECARBOXYLASE PROENZYME"/>
    <property type="match status" value="1"/>
</dbReference>
<dbReference type="PANTHER" id="PTHR33866:SF1">
    <property type="entry name" value="S-ADENOSYLMETHIONINE DECARBOXYLASE PROENZYME"/>
    <property type="match status" value="1"/>
</dbReference>
<dbReference type="Pfam" id="PF02675">
    <property type="entry name" value="AdoMet_dc"/>
    <property type="match status" value="1"/>
</dbReference>
<dbReference type="PIRSF" id="PIRSF001356">
    <property type="entry name" value="SAM_decarboxylas"/>
    <property type="match status" value="1"/>
</dbReference>
<dbReference type="SUPFAM" id="SSF56276">
    <property type="entry name" value="S-adenosylmethionine decarboxylase"/>
    <property type="match status" value="1"/>
</dbReference>
<sequence>MVKPLPRLRLQGFNNLTKALSFNIYDVCYARTEEERQRYIDYIDERYDADRLTQILTDVAEIIGANILNIARQDYDPQGASVTILISEEPVIDKKQAGKELISDAVVAHMDKSHITVHTYPETHPQEGIATFRADIDVATCGVISPLKALNYLIESLESDIVIMDYRVRGFTRDVKGKKHFIDHKINSIQNFLSKSIKSRYEMFDVNVYQENIFHTKMHLKDFDLDQYLFEEKARNLSFKERMKIEALLKLEIEELFHGRNLAE</sequence>
<protein>
    <recommendedName>
        <fullName evidence="1">S-adenosylmethionine decarboxylase proenzyme</fullName>
        <shortName evidence="1">AdoMetDC</shortName>
        <shortName evidence="1">SAMDC</shortName>
        <ecNumber evidence="1">4.1.1.50</ecNumber>
    </recommendedName>
    <component>
        <recommendedName>
            <fullName evidence="1">S-adenosylmethionine decarboxylase beta chain</fullName>
        </recommendedName>
    </component>
    <component>
        <recommendedName>
            <fullName evidence="1">S-adenosylmethionine decarboxylase alpha chain</fullName>
        </recommendedName>
    </component>
</protein>
<evidence type="ECO:0000255" key="1">
    <source>
        <dbReference type="HAMAP-Rule" id="MF_00465"/>
    </source>
</evidence>
<organism>
    <name type="scientific">Xylella fastidiosa (strain 9a5c)</name>
    <dbReference type="NCBI Taxonomy" id="160492"/>
    <lineage>
        <taxon>Bacteria</taxon>
        <taxon>Pseudomonadati</taxon>
        <taxon>Pseudomonadota</taxon>
        <taxon>Gammaproteobacteria</taxon>
        <taxon>Lysobacterales</taxon>
        <taxon>Lysobacteraceae</taxon>
        <taxon>Xylella</taxon>
    </lineage>
</organism>
<comment type="function">
    <text evidence="1">Catalyzes the decarboxylation of S-adenosylmethionine to S-adenosylmethioninamine (dcAdoMet), the propylamine donor required for the synthesis of the polyamines spermine and spermidine from the diamine putrescine.</text>
</comment>
<comment type="catalytic activity">
    <reaction evidence="1">
        <text>S-adenosyl-L-methionine + H(+) = S-adenosyl 3-(methylsulfanyl)propylamine + CO2</text>
        <dbReference type="Rhea" id="RHEA:15981"/>
        <dbReference type="ChEBI" id="CHEBI:15378"/>
        <dbReference type="ChEBI" id="CHEBI:16526"/>
        <dbReference type="ChEBI" id="CHEBI:57443"/>
        <dbReference type="ChEBI" id="CHEBI:59789"/>
        <dbReference type="EC" id="4.1.1.50"/>
    </reaction>
</comment>
<comment type="cofactor">
    <cofactor evidence="1">
        <name>pyruvate</name>
        <dbReference type="ChEBI" id="CHEBI:15361"/>
    </cofactor>
    <text evidence="1">Binds 1 pyruvoyl group covalently per subunit.</text>
</comment>
<comment type="pathway">
    <text evidence="1">Amine and polyamine biosynthesis; S-adenosylmethioninamine biosynthesis; S-adenosylmethioninamine from S-adenosyl-L-methionine: step 1/1.</text>
</comment>
<comment type="subunit">
    <text evidence="1">Heterooctamer of four alpha and four beta chains arranged as a tetramer of alpha/beta heterodimers.</text>
</comment>
<comment type="PTM">
    <text evidence="1">Is synthesized initially as an inactive proenzyme. Formation of the active enzyme involves a self-maturation process in which the active site pyruvoyl group is generated from an internal serine residue via an autocatalytic post-translational modification. Two non-identical subunits are generated from the proenzyme in this reaction, and the pyruvate is formed at the N-terminus of the alpha chain, which is derived from the carboxyl end of the proenzyme. The post-translation cleavage follows an unusual pathway, termed non-hydrolytic serinolysis, in which the side chain hydroxyl group of the serine supplies its oxygen atom to form the C-terminus of the beta chain, while the remainder of the serine residue undergoes an oxidative deamination to produce ammonia and the pyruvoyl group blocking the N-terminus of the alpha chain.</text>
</comment>
<comment type="similarity">
    <text evidence="1">Belongs to the prokaryotic AdoMetDC family. Type 2 subfamily.</text>
</comment>
<accession>Q9PD40</accession>
<keyword id="KW-0068">Autocatalytic cleavage</keyword>
<keyword id="KW-0210">Decarboxylase</keyword>
<keyword id="KW-0456">Lyase</keyword>
<keyword id="KW-0620">Polyamine biosynthesis</keyword>
<keyword id="KW-0670">Pyruvate</keyword>
<keyword id="KW-0949">S-adenosyl-L-methionine</keyword>
<keyword id="KW-0704">Schiff base</keyword>
<keyword id="KW-0745">Spermidine biosynthesis</keyword>
<keyword id="KW-0865">Zymogen</keyword>
<reference key="1">
    <citation type="journal article" date="2000" name="Nature">
        <title>The genome sequence of the plant pathogen Xylella fastidiosa.</title>
        <authorList>
            <person name="Simpson A.J.G."/>
            <person name="Reinach F.C."/>
            <person name="Arruda P."/>
            <person name="Abreu F.A."/>
            <person name="Acencio M."/>
            <person name="Alvarenga R."/>
            <person name="Alves L.M.C."/>
            <person name="Araya J.E."/>
            <person name="Baia G.S."/>
            <person name="Baptista C.S."/>
            <person name="Barros M.H."/>
            <person name="Bonaccorsi E.D."/>
            <person name="Bordin S."/>
            <person name="Bove J.M."/>
            <person name="Briones M.R.S."/>
            <person name="Bueno M.R.P."/>
            <person name="Camargo A.A."/>
            <person name="Camargo L.E.A."/>
            <person name="Carraro D.M."/>
            <person name="Carrer H."/>
            <person name="Colauto N.B."/>
            <person name="Colombo C."/>
            <person name="Costa F.F."/>
            <person name="Costa M.C.R."/>
            <person name="Costa-Neto C.M."/>
            <person name="Coutinho L.L."/>
            <person name="Cristofani M."/>
            <person name="Dias-Neto E."/>
            <person name="Docena C."/>
            <person name="El-Dorry H."/>
            <person name="Facincani A.P."/>
            <person name="Ferreira A.J.S."/>
            <person name="Ferreira V.C.A."/>
            <person name="Ferro J.A."/>
            <person name="Fraga J.S."/>
            <person name="Franca S.C."/>
            <person name="Franco M.C."/>
            <person name="Frohme M."/>
            <person name="Furlan L.R."/>
            <person name="Garnier M."/>
            <person name="Goldman G.H."/>
            <person name="Goldman M.H.S."/>
            <person name="Gomes S.L."/>
            <person name="Gruber A."/>
            <person name="Ho P.L."/>
            <person name="Hoheisel J.D."/>
            <person name="Junqueira M.L."/>
            <person name="Kemper E.L."/>
            <person name="Kitajima J.P."/>
            <person name="Krieger J.E."/>
            <person name="Kuramae E.E."/>
            <person name="Laigret F."/>
            <person name="Lambais M.R."/>
            <person name="Leite L.C.C."/>
            <person name="Lemos E.G.M."/>
            <person name="Lemos M.V.F."/>
            <person name="Lopes S.A."/>
            <person name="Lopes C.R."/>
            <person name="Machado J.A."/>
            <person name="Machado M.A."/>
            <person name="Madeira A.M.B.N."/>
            <person name="Madeira H.M.F."/>
            <person name="Marino C.L."/>
            <person name="Marques M.V."/>
            <person name="Martins E.A.L."/>
            <person name="Martins E.M.F."/>
            <person name="Matsukuma A.Y."/>
            <person name="Menck C.F.M."/>
            <person name="Miracca E.C."/>
            <person name="Miyaki C.Y."/>
            <person name="Monteiro-Vitorello C.B."/>
            <person name="Moon D.H."/>
            <person name="Nagai M.A."/>
            <person name="Nascimento A.L.T.O."/>
            <person name="Netto L.E.S."/>
            <person name="Nhani A. Jr."/>
            <person name="Nobrega F.G."/>
            <person name="Nunes L.R."/>
            <person name="Oliveira M.A."/>
            <person name="de Oliveira M.C."/>
            <person name="de Oliveira R.C."/>
            <person name="Palmieri D.A."/>
            <person name="Paris A."/>
            <person name="Peixoto B.R."/>
            <person name="Pereira G.A.G."/>
            <person name="Pereira H.A. Jr."/>
            <person name="Pesquero J.B."/>
            <person name="Quaggio R.B."/>
            <person name="Roberto P.G."/>
            <person name="Rodrigues V."/>
            <person name="de Rosa A.J.M."/>
            <person name="de Rosa V.E. Jr."/>
            <person name="de Sa R.G."/>
            <person name="Santelli R.V."/>
            <person name="Sawasaki H.E."/>
            <person name="da Silva A.C.R."/>
            <person name="da Silva A.M."/>
            <person name="da Silva F.R."/>
            <person name="Silva W.A. Jr."/>
            <person name="da Silveira J.F."/>
            <person name="Silvestri M.L.Z."/>
            <person name="Siqueira W.J."/>
            <person name="de Souza A.A."/>
            <person name="de Souza A.P."/>
            <person name="Terenzi M.F."/>
            <person name="Truffi D."/>
            <person name="Tsai S.M."/>
            <person name="Tsuhako M.H."/>
            <person name="Vallada H."/>
            <person name="Van Sluys M.A."/>
            <person name="Verjovski-Almeida S."/>
            <person name="Vettore A.L."/>
            <person name="Zago M.A."/>
            <person name="Zatz M."/>
            <person name="Meidanis J."/>
            <person name="Setubal J.C."/>
        </authorList>
    </citation>
    <scope>NUCLEOTIDE SEQUENCE [LARGE SCALE GENOMIC DNA]</scope>
    <source>
        <strain>9a5c</strain>
    </source>
</reference>